<evidence type="ECO:0000255" key="1">
    <source>
        <dbReference type="HAMAP-Rule" id="MF_01394"/>
    </source>
</evidence>
<sequence length="120" mass="13868">MFLLYEYDIFWAFLIISSAIPVLAFLISGVLSPIRKGPEKLSSYESGIEPIGDAWLQFRIRYYMFALVFVVFDVETVFLYPWAMSFDVLGVSAFIEVFIFVLILILGLVYAWRKGALEWS</sequence>
<gene>
    <name evidence="1" type="primary">ndhC</name>
</gene>
<reference key="1">
    <citation type="submission" date="2007-03" db="EMBL/GenBank/DDBJ databases">
        <title>Sequencing analysis of Arabis hirsuta chloroplast DNA.</title>
        <authorList>
            <person name="Hosouchi T."/>
            <person name="Tsuruoka H."/>
            <person name="Kotani H."/>
        </authorList>
    </citation>
    <scope>NUCLEOTIDE SEQUENCE [LARGE SCALE GENOMIC DNA]</scope>
</reference>
<name>NU3C_ARAHI</name>
<accession>A4QK23</accession>
<comment type="function">
    <text evidence="1">NDH shuttles electrons from NAD(P)H:plastoquinone, via FMN and iron-sulfur (Fe-S) centers, to quinones in the photosynthetic chain and possibly in a chloroplast respiratory chain. The immediate electron acceptor for the enzyme in this species is believed to be plastoquinone. Couples the redox reaction to proton translocation, and thus conserves the redox energy in a proton gradient.</text>
</comment>
<comment type="catalytic activity">
    <reaction evidence="1">
        <text>a plastoquinone + NADH + (n+1) H(+)(in) = a plastoquinol + NAD(+) + n H(+)(out)</text>
        <dbReference type="Rhea" id="RHEA:42608"/>
        <dbReference type="Rhea" id="RHEA-COMP:9561"/>
        <dbReference type="Rhea" id="RHEA-COMP:9562"/>
        <dbReference type="ChEBI" id="CHEBI:15378"/>
        <dbReference type="ChEBI" id="CHEBI:17757"/>
        <dbReference type="ChEBI" id="CHEBI:57540"/>
        <dbReference type="ChEBI" id="CHEBI:57945"/>
        <dbReference type="ChEBI" id="CHEBI:62192"/>
    </reaction>
</comment>
<comment type="catalytic activity">
    <reaction evidence="1">
        <text>a plastoquinone + NADPH + (n+1) H(+)(in) = a plastoquinol + NADP(+) + n H(+)(out)</text>
        <dbReference type="Rhea" id="RHEA:42612"/>
        <dbReference type="Rhea" id="RHEA-COMP:9561"/>
        <dbReference type="Rhea" id="RHEA-COMP:9562"/>
        <dbReference type="ChEBI" id="CHEBI:15378"/>
        <dbReference type="ChEBI" id="CHEBI:17757"/>
        <dbReference type="ChEBI" id="CHEBI:57783"/>
        <dbReference type="ChEBI" id="CHEBI:58349"/>
        <dbReference type="ChEBI" id="CHEBI:62192"/>
    </reaction>
</comment>
<comment type="subunit">
    <text evidence="1">NDH is composed of at least 16 different subunits, 5 of which are encoded in the nucleus.</text>
</comment>
<comment type="subcellular location">
    <subcellularLocation>
        <location evidence="1">Plastid</location>
        <location evidence="1">Chloroplast thylakoid membrane</location>
        <topology evidence="1">Multi-pass membrane protein</topology>
    </subcellularLocation>
</comment>
<comment type="similarity">
    <text evidence="1">Belongs to the complex I subunit 3 family.</text>
</comment>
<geneLocation type="chloroplast"/>
<protein>
    <recommendedName>
        <fullName evidence="1">NAD(P)H-quinone oxidoreductase subunit 3, chloroplastic</fullName>
        <ecNumber evidence="1">7.1.1.-</ecNumber>
    </recommendedName>
    <alternativeName>
        <fullName evidence="1">NAD(P)H dehydrogenase subunit 3</fullName>
    </alternativeName>
    <alternativeName>
        <fullName evidence="1">NADH-plastoquinone oxidoreductase subunit 3</fullName>
    </alternativeName>
</protein>
<dbReference type="EC" id="7.1.1.-" evidence="1"/>
<dbReference type="EMBL" id="AP009369">
    <property type="protein sequence ID" value="BAF50028.1"/>
    <property type="molecule type" value="Genomic_DNA"/>
</dbReference>
<dbReference type="RefSeq" id="YP_001123204.1">
    <property type="nucleotide sequence ID" value="NC_009268.1"/>
</dbReference>
<dbReference type="SMR" id="A4QK23"/>
<dbReference type="GeneID" id="4962597"/>
<dbReference type="GO" id="GO:0009535">
    <property type="term" value="C:chloroplast thylakoid membrane"/>
    <property type="evidence" value="ECO:0007669"/>
    <property type="project" value="UniProtKB-SubCell"/>
</dbReference>
<dbReference type="GO" id="GO:0030964">
    <property type="term" value="C:NADH dehydrogenase complex"/>
    <property type="evidence" value="ECO:0007669"/>
    <property type="project" value="TreeGrafter"/>
</dbReference>
<dbReference type="GO" id="GO:0008137">
    <property type="term" value="F:NADH dehydrogenase (ubiquinone) activity"/>
    <property type="evidence" value="ECO:0007669"/>
    <property type="project" value="InterPro"/>
</dbReference>
<dbReference type="GO" id="GO:0048038">
    <property type="term" value="F:quinone binding"/>
    <property type="evidence" value="ECO:0007669"/>
    <property type="project" value="UniProtKB-KW"/>
</dbReference>
<dbReference type="GO" id="GO:0019684">
    <property type="term" value="P:photosynthesis, light reaction"/>
    <property type="evidence" value="ECO:0007669"/>
    <property type="project" value="UniProtKB-UniRule"/>
</dbReference>
<dbReference type="FunFam" id="1.20.58.1610:FF:000001">
    <property type="entry name" value="NAD(P)H-quinone oxidoreductase subunit 3, chloroplastic"/>
    <property type="match status" value="1"/>
</dbReference>
<dbReference type="Gene3D" id="1.20.58.1610">
    <property type="entry name" value="NADH:ubiquinone/plastoquinone oxidoreductase, chain 3"/>
    <property type="match status" value="1"/>
</dbReference>
<dbReference type="HAMAP" id="MF_01394">
    <property type="entry name" value="NDH1_NuoA"/>
    <property type="match status" value="1"/>
</dbReference>
<dbReference type="InterPro" id="IPR023043">
    <property type="entry name" value="NAD(P)H_OxRDtase_bac/plastid"/>
</dbReference>
<dbReference type="InterPro" id="IPR000440">
    <property type="entry name" value="NADH_UbQ/plastoQ_OxRdtase_su3"/>
</dbReference>
<dbReference type="InterPro" id="IPR038430">
    <property type="entry name" value="NDAH_ubi_oxred_su3_sf"/>
</dbReference>
<dbReference type="PANTHER" id="PTHR11058">
    <property type="entry name" value="NADH-UBIQUINONE OXIDOREDUCTASE CHAIN 3"/>
    <property type="match status" value="1"/>
</dbReference>
<dbReference type="PANTHER" id="PTHR11058:SF9">
    <property type="entry name" value="NADH-UBIQUINONE OXIDOREDUCTASE CHAIN 3"/>
    <property type="match status" value="1"/>
</dbReference>
<dbReference type="Pfam" id="PF00507">
    <property type="entry name" value="Oxidored_q4"/>
    <property type="match status" value="1"/>
</dbReference>
<keyword id="KW-0150">Chloroplast</keyword>
<keyword id="KW-0472">Membrane</keyword>
<keyword id="KW-0520">NAD</keyword>
<keyword id="KW-0521">NADP</keyword>
<keyword id="KW-0934">Plastid</keyword>
<keyword id="KW-0618">Plastoquinone</keyword>
<keyword id="KW-0874">Quinone</keyword>
<keyword id="KW-0793">Thylakoid</keyword>
<keyword id="KW-1278">Translocase</keyword>
<keyword id="KW-0812">Transmembrane</keyword>
<keyword id="KW-1133">Transmembrane helix</keyword>
<keyword id="KW-0813">Transport</keyword>
<proteinExistence type="inferred from homology"/>
<organism>
    <name type="scientific">Arabis hirsuta</name>
    <name type="common">Hairy rock-cress</name>
    <name type="synonym">Turritis hirsuta</name>
    <dbReference type="NCBI Taxonomy" id="78191"/>
    <lineage>
        <taxon>Eukaryota</taxon>
        <taxon>Viridiplantae</taxon>
        <taxon>Streptophyta</taxon>
        <taxon>Embryophyta</taxon>
        <taxon>Tracheophyta</taxon>
        <taxon>Spermatophyta</taxon>
        <taxon>Magnoliopsida</taxon>
        <taxon>eudicotyledons</taxon>
        <taxon>Gunneridae</taxon>
        <taxon>Pentapetalae</taxon>
        <taxon>rosids</taxon>
        <taxon>malvids</taxon>
        <taxon>Brassicales</taxon>
        <taxon>Brassicaceae</taxon>
        <taxon>Arabideae</taxon>
        <taxon>Arabis</taxon>
    </lineage>
</organism>
<feature type="chain" id="PRO_0000362808" description="NAD(P)H-quinone oxidoreductase subunit 3, chloroplastic">
    <location>
        <begin position="1"/>
        <end position="120"/>
    </location>
</feature>
<feature type="transmembrane region" description="Helical" evidence="1">
    <location>
        <begin position="9"/>
        <end position="29"/>
    </location>
</feature>
<feature type="transmembrane region" description="Helical" evidence="1">
    <location>
        <begin position="64"/>
        <end position="84"/>
    </location>
</feature>
<feature type="transmembrane region" description="Helical" evidence="1">
    <location>
        <begin position="88"/>
        <end position="108"/>
    </location>
</feature>